<comment type="function">
    <text evidence="2 5 6">Multifunctional protein that is involved in the regulation of many processes including cell proliferation, apoptosis, cell cycle progression or transcription (PubMed:21636789). Regulates the proliferation of neuronal stem cells, differentiation of leukemic cells and progression from G1 to S phase of the cell cycle. As negative regulator of caspase-3-dependent apoptosis, may act as an antagonist of ANP32A in regulating tissue homeostasis (By similarity). Exhibits histone chaperone properties, able to recruit histones to certain promoters, thus regulating the transcription of specific genes (By similarity). Also plays an essential role in the nucleocytoplasmic transport of specific mRNAs via the uncommon nuclear mRNA export receptor XPO1/CRM1 (By similarity). Participates in the regulation of adequate adaptive immune responses by acting on mRNA expression and cell proliferation (PubMed:30890743).</text>
</comment>
<comment type="subunit">
    <text evidence="2">Interacts with histones H3 and H4. Interacts with KLF5; this interaction induces promoter region-specific histone incorporation and inhibition of histone acetylation by ANP32B.</text>
</comment>
<comment type="subcellular location">
    <subcellularLocation>
        <location evidence="2">Nucleus</location>
    </subcellularLocation>
    <text evidence="2">Accumulates in the nuclei at the S phase.</text>
</comment>
<comment type="alternative products">
    <event type="alternative splicing"/>
    <isoform>
        <id>Q9EST5-1</id>
        <name>1</name>
        <sequence type="displayed"/>
    </isoform>
    <isoform>
        <id>Q9EST5-2</id>
        <name>2</name>
        <sequence type="described" ref="VSP_023520 VSP_023521"/>
    </isoform>
</comment>
<comment type="domain">
    <text evidence="1">Histone binding is mediated by the concave surface of the LRR region.</text>
</comment>
<comment type="PTM">
    <text>Some glutamate residues are glycylated by TTLL8. This modification occurs exclusively on glutamate residues and results in a glycine chain on the gamma-carboxyl group.</text>
</comment>
<comment type="PTM">
    <text evidence="2">Directly cleaved by caspase-3/CASP3.</text>
</comment>
<comment type="disruption phenotype">
    <text evidence="5 6 7">Deficient mice display a highly penetrant perinatal lethality in a mixed genetic background and a fully penetrant lethality in a pure C57BL/6 background (PubMed:21636789). Mutants also show enhanced clinical symptoms correlated with depletion of naive effector T-cells, exhaustion of lymphocytes and enhanced prevalence of follicular T-helper cells (PubMed:30890743). In addition, mice show significantly reduced H3N2 or H5N1 influenza viral loads, inflammatory cytokine response and reduced pathogenicity compared to WT (PubMed:32231671).</text>
</comment>
<comment type="similarity">
    <text evidence="9">Belongs to the ANP32 family.</text>
</comment>
<protein>
    <recommendedName>
        <fullName>Acidic leucine-rich nuclear phosphoprotein 32 family member B</fullName>
    </recommendedName>
    <alternativeName>
        <fullName>Proliferation-related acidic leucine-rich protein PAL31</fullName>
    </alternativeName>
</protein>
<reference key="1">
    <citation type="journal article" date="2001" name="Biochem. Biophys. Res. Commun.">
        <title>PAL31, a nuclear protein required for progression to the S phase.</title>
        <authorList>
            <person name="Sun W."/>
            <person name="Hattori N."/>
            <person name="Mutai H."/>
            <person name="Toyoshima Y."/>
            <person name="Kimura H."/>
            <person name="Tanaka S."/>
            <person name="Shiota K."/>
        </authorList>
    </citation>
    <scope>NUCLEOTIDE SEQUENCE [MRNA] (ISOFORM 1)</scope>
    <source>
        <strain>BALB/cJ</strain>
        <tissue>Brain</tissue>
    </source>
</reference>
<reference key="2">
    <citation type="journal article" date="2005" name="Science">
        <title>The transcriptional landscape of the mammalian genome.</title>
        <authorList>
            <person name="Carninci P."/>
            <person name="Kasukawa T."/>
            <person name="Katayama S."/>
            <person name="Gough J."/>
            <person name="Frith M.C."/>
            <person name="Maeda N."/>
            <person name="Oyama R."/>
            <person name="Ravasi T."/>
            <person name="Lenhard B."/>
            <person name="Wells C."/>
            <person name="Kodzius R."/>
            <person name="Shimokawa K."/>
            <person name="Bajic V.B."/>
            <person name="Brenner S.E."/>
            <person name="Batalov S."/>
            <person name="Forrest A.R."/>
            <person name="Zavolan M."/>
            <person name="Davis M.J."/>
            <person name="Wilming L.G."/>
            <person name="Aidinis V."/>
            <person name="Allen J.E."/>
            <person name="Ambesi-Impiombato A."/>
            <person name="Apweiler R."/>
            <person name="Aturaliya R.N."/>
            <person name="Bailey T.L."/>
            <person name="Bansal M."/>
            <person name="Baxter L."/>
            <person name="Beisel K.W."/>
            <person name="Bersano T."/>
            <person name="Bono H."/>
            <person name="Chalk A.M."/>
            <person name="Chiu K.P."/>
            <person name="Choudhary V."/>
            <person name="Christoffels A."/>
            <person name="Clutterbuck D.R."/>
            <person name="Crowe M.L."/>
            <person name="Dalla E."/>
            <person name="Dalrymple B.P."/>
            <person name="de Bono B."/>
            <person name="Della Gatta G."/>
            <person name="di Bernardo D."/>
            <person name="Down T."/>
            <person name="Engstrom P."/>
            <person name="Fagiolini M."/>
            <person name="Faulkner G."/>
            <person name="Fletcher C.F."/>
            <person name="Fukushima T."/>
            <person name="Furuno M."/>
            <person name="Futaki S."/>
            <person name="Gariboldi M."/>
            <person name="Georgii-Hemming P."/>
            <person name="Gingeras T.R."/>
            <person name="Gojobori T."/>
            <person name="Green R.E."/>
            <person name="Gustincich S."/>
            <person name="Harbers M."/>
            <person name="Hayashi Y."/>
            <person name="Hensch T.K."/>
            <person name="Hirokawa N."/>
            <person name="Hill D."/>
            <person name="Huminiecki L."/>
            <person name="Iacono M."/>
            <person name="Ikeo K."/>
            <person name="Iwama A."/>
            <person name="Ishikawa T."/>
            <person name="Jakt M."/>
            <person name="Kanapin A."/>
            <person name="Katoh M."/>
            <person name="Kawasawa Y."/>
            <person name="Kelso J."/>
            <person name="Kitamura H."/>
            <person name="Kitano H."/>
            <person name="Kollias G."/>
            <person name="Krishnan S.P."/>
            <person name="Kruger A."/>
            <person name="Kummerfeld S.K."/>
            <person name="Kurochkin I.V."/>
            <person name="Lareau L.F."/>
            <person name="Lazarevic D."/>
            <person name="Lipovich L."/>
            <person name="Liu J."/>
            <person name="Liuni S."/>
            <person name="McWilliam S."/>
            <person name="Madan Babu M."/>
            <person name="Madera M."/>
            <person name="Marchionni L."/>
            <person name="Matsuda H."/>
            <person name="Matsuzawa S."/>
            <person name="Miki H."/>
            <person name="Mignone F."/>
            <person name="Miyake S."/>
            <person name="Morris K."/>
            <person name="Mottagui-Tabar S."/>
            <person name="Mulder N."/>
            <person name="Nakano N."/>
            <person name="Nakauchi H."/>
            <person name="Ng P."/>
            <person name="Nilsson R."/>
            <person name="Nishiguchi S."/>
            <person name="Nishikawa S."/>
            <person name="Nori F."/>
            <person name="Ohara O."/>
            <person name="Okazaki Y."/>
            <person name="Orlando V."/>
            <person name="Pang K.C."/>
            <person name="Pavan W.J."/>
            <person name="Pavesi G."/>
            <person name="Pesole G."/>
            <person name="Petrovsky N."/>
            <person name="Piazza S."/>
            <person name="Reed J."/>
            <person name="Reid J.F."/>
            <person name="Ring B.Z."/>
            <person name="Ringwald M."/>
            <person name="Rost B."/>
            <person name="Ruan Y."/>
            <person name="Salzberg S.L."/>
            <person name="Sandelin A."/>
            <person name="Schneider C."/>
            <person name="Schoenbach C."/>
            <person name="Sekiguchi K."/>
            <person name="Semple C.A."/>
            <person name="Seno S."/>
            <person name="Sessa L."/>
            <person name="Sheng Y."/>
            <person name="Shibata Y."/>
            <person name="Shimada H."/>
            <person name="Shimada K."/>
            <person name="Silva D."/>
            <person name="Sinclair B."/>
            <person name="Sperling S."/>
            <person name="Stupka E."/>
            <person name="Sugiura K."/>
            <person name="Sultana R."/>
            <person name="Takenaka Y."/>
            <person name="Taki K."/>
            <person name="Tammoja K."/>
            <person name="Tan S.L."/>
            <person name="Tang S."/>
            <person name="Taylor M.S."/>
            <person name="Tegner J."/>
            <person name="Teichmann S.A."/>
            <person name="Ueda H.R."/>
            <person name="van Nimwegen E."/>
            <person name="Verardo R."/>
            <person name="Wei C.L."/>
            <person name="Yagi K."/>
            <person name="Yamanishi H."/>
            <person name="Zabarovsky E."/>
            <person name="Zhu S."/>
            <person name="Zimmer A."/>
            <person name="Hide W."/>
            <person name="Bult C."/>
            <person name="Grimmond S.M."/>
            <person name="Teasdale R.D."/>
            <person name="Liu E.T."/>
            <person name="Brusic V."/>
            <person name="Quackenbush J."/>
            <person name="Wahlestedt C."/>
            <person name="Mattick J.S."/>
            <person name="Hume D.A."/>
            <person name="Kai C."/>
            <person name="Sasaki D."/>
            <person name="Tomaru Y."/>
            <person name="Fukuda S."/>
            <person name="Kanamori-Katayama M."/>
            <person name="Suzuki M."/>
            <person name="Aoki J."/>
            <person name="Arakawa T."/>
            <person name="Iida J."/>
            <person name="Imamura K."/>
            <person name="Itoh M."/>
            <person name="Kato T."/>
            <person name="Kawaji H."/>
            <person name="Kawagashira N."/>
            <person name="Kawashima T."/>
            <person name="Kojima M."/>
            <person name="Kondo S."/>
            <person name="Konno H."/>
            <person name="Nakano K."/>
            <person name="Ninomiya N."/>
            <person name="Nishio T."/>
            <person name="Okada M."/>
            <person name="Plessy C."/>
            <person name="Shibata K."/>
            <person name="Shiraki T."/>
            <person name="Suzuki S."/>
            <person name="Tagami M."/>
            <person name="Waki K."/>
            <person name="Watahiki A."/>
            <person name="Okamura-Oho Y."/>
            <person name="Suzuki H."/>
            <person name="Kawai J."/>
            <person name="Hayashizaki Y."/>
        </authorList>
    </citation>
    <scope>NUCLEOTIDE SEQUENCE [LARGE SCALE MRNA] (ISOFORM 1)</scope>
    <source>
        <strain>C57BL/6J</strain>
    </source>
</reference>
<reference key="3">
    <citation type="journal article" date="2009" name="PLoS Biol.">
        <title>Lineage-specific biology revealed by a finished genome assembly of the mouse.</title>
        <authorList>
            <person name="Church D.M."/>
            <person name="Goodstadt L."/>
            <person name="Hillier L.W."/>
            <person name="Zody M.C."/>
            <person name="Goldstein S."/>
            <person name="She X."/>
            <person name="Bult C.J."/>
            <person name="Agarwala R."/>
            <person name="Cherry J.L."/>
            <person name="DiCuccio M."/>
            <person name="Hlavina W."/>
            <person name="Kapustin Y."/>
            <person name="Meric P."/>
            <person name="Maglott D."/>
            <person name="Birtle Z."/>
            <person name="Marques A.C."/>
            <person name="Graves T."/>
            <person name="Zhou S."/>
            <person name="Teague B."/>
            <person name="Potamousis K."/>
            <person name="Churas C."/>
            <person name="Place M."/>
            <person name="Herschleb J."/>
            <person name="Runnheim R."/>
            <person name="Forrest D."/>
            <person name="Amos-Landgraf J."/>
            <person name="Schwartz D.C."/>
            <person name="Cheng Z."/>
            <person name="Lindblad-Toh K."/>
            <person name="Eichler E.E."/>
            <person name="Ponting C.P."/>
        </authorList>
    </citation>
    <scope>NUCLEOTIDE SEQUENCE [LARGE SCALE GENOMIC DNA]</scope>
    <source>
        <strain>C57BL/6J</strain>
    </source>
</reference>
<reference key="4">
    <citation type="journal article" date="2004" name="Genome Res.">
        <title>The status, quality, and expansion of the NIH full-length cDNA project: the Mammalian Gene Collection (MGC).</title>
        <authorList>
            <consortium name="The MGC Project Team"/>
        </authorList>
    </citation>
    <scope>NUCLEOTIDE SEQUENCE [LARGE SCALE MRNA] (ISOFORMS 1 AND 2)</scope>
    <source>
        <strain>FVB/N</strain>
        <strain>NMRI</strain>
        <tissue>Mammary tumor</tissue>
    </source>
</reference>
<reference key="5">
    <citation type="journal article" date="2005" name="Cerebellum">
        <title>The Anp32 family of proteins containing leucine-rich repeats.</title>
        <authorList>
            <person name="Matilla A."/>
            <person name="Radrizzani M."/>
        </authorList>
    </citation>
    <scope>GENE FAMILY</scope>
    <scope>NOMENCLATURE</scope>
</reference>
<reference key="6">
    <citation type="journal article" date="2007" name="Mol. Cell. Proteomics">
        <title>Mitochondrial phosphoproteome revealed by an improved IMAC method and MS/MS/MS.</title>
        <authorList>
            <person name="Lee J."/>
            <person name="Xu Y."/>
            <person name="Chen Y."/>
            <person name="Sprung R."/>
            <person name="Kim S.C."/>
            <person name="Xie S."/>
            <person name="Zhao Y."/>
        </authorList>
    </citation>
    <scope>PHOSPHORYLATION [LARGE SCALE ANALYSIS] AT THR-265</scope>
    <scope>IDENTIFICATION BY MASS SPECTROMETRY [LARGE SCALE ANALYSIS]</scope>
    <source>
        <tissue>Liver</tissue>
    </source>
</reference>
<reference key="7">
    <citation type="journal article" date="2009" name="Cell">
        <title>Evolutionary divergence of enzymatic mechanisms for posttranslational polyglycylation.</title>
        <authorList>
            <person name="Rogowski K."/>
            <person name="Juge F."/>
            <person name="van Dijk J."/>
            <person name="Wloga D."/>
            <person name="Strub J.-M."/>
            <person name="Levilliers N."/>
            <person name="Thomas D."/>
            <person name="Bre M.-H."/>
            <person name="Van Dorsselaer A."/>
            <person name="Gaertig J."/>
            <person name="Janke C."/>
        </authorList>
    </citation>
    <scope>GLYCYLATION</scope>
</reference>
<reference key="8">
    <citation type="journal article" date="2010" name="Cell">
        <title>A tissue-specific atlas of mouse protein phosphorylation and expression.</title>
        <authorList>
            <person name="Huttlin E.L."/>
            <person name="Jedrychowski M.P."/>
            <person name="Elias J.E."/>
            <person name="Goswami T."/>
            <person name="Rad R."/>
            <person name="Beausoleil S.A."/>
            <person name="Villen J."/>
            <person name="Haas W."/>
            <person name="Sowa M.E."/>
            <person name="Gygi S.P."/>
        </authorList>
    </citation>
    <scope>IDENTIFICATION BY MASS SPECTROMETRY [LARGE SCALE ANALYSIS]</scope>
    <source>
        <tissue>Brain</tissue>
        <tissue>Brown adipose tissue</tissue>
        <tissue>Heart</tissue>
        <tissue>Kidney</tissue>
        <tissue>Liver</tissue>
        <tissue>Lung</tissue>
        <tissue>Pancreas</tissue>
        <tissue>Spleen</tissue>
        <tissue>Testis</tissue>
    </source>
</reference>
<reference key="9">
    <citation type="journal article" date="2011" name="Proc. Natl. Acad. Sci. U.S.A.">
        <title>Acidic nuclear phosphoprotein 32kDa (ANP32)B-deficient mouse reveals a hierarchy of ANP32 importance in mammalian development.</title>
        <authorList>
            <person name="Reilly P.T."/>
            <person name="Afzal S."/>
            <person name="Gorrini C."/>
            <person name="Lui K."/>
            <person name="Bukhman Y.V."/>
            <person name="Wakeham A."/>
            <person name="Haight J."/>
            <person name="Ling T.W."/>
            <person name="Cheung C.C."/>
            <person name="Elia A.J."/>
            <person name="Turner P.V."/>
            <person name="Mak T.W."/>
        </authorList>
    </citation>
    <scope>FUNCTION</scope>
    <scope>DISRUPTION PHENOTYPE</scope>
</reference>
<reference key="10">
    <citation type="journal article" date="2019" name="Sci. Rep.">
        <title>The acidic protein rich in leucines Anp32b is an immunomodulator of inflammation in mice.</title>
        <authorList>
            <person name="Chemnitz J."/>
            <person name="Pieper D."/>
            <person name="Stich L."/>
            <person name="Schumacher U."/>
            <person name="Balabanov S."/>
            <person name="Spohn M."/>
            <person name="Grundhoff A."/>
            <person name="Steinkasserer A."/>
            <person name="Hauber J."/>
            <person name="Zinser E."/>
        </authorList>
    </citation>
    <scope>FUNCTION</scope>
    <scope>DISRUPTION PHENOTYPE</scope>
</reference>
<reference key="11">
    <citation type="journal article" date="2020" name="Front. Immunol.">
        <title>ANP32B Deficiency Protects Mice From Lethal Influenza A Virus Challenge by Dampening the Host Immune Response.</title>
        <authorList>
            <person name="Beck S."/>
            <person name="Zickler M."/>
            <person name="Pinho Dos Reis V."/>
            <person name="Guenther T."/>
            <person name="Grundhoff A."/>
            <person name="Reilly P.T."/>
            <person name="Mak T.W."/>
            <person name="Stanelle-Bertram S."/>
            <person name="Gabriel G."/>
        </authorList>
    </citation>
    <scope>DISRUPTION PHENOTYPE</scope>
</reference>
<name>AN32B_MOUSE</name>
<keyword id="KW-0025">Alternative splicing</keyword>
<keyword id="KW-0143">Chaperone</keyword>
<keyword id="KW-0433">Leucine-rich repeat</keyword>
<keyword id="KW-0539">Nucleus</keyword>
<keyword id="KW-0597">Phosphoprotein</keyword>
<keyword id="KW-1185">Reference proteome</keyword>
<keyword id="KW-0677">Repeat</keyword>
<dbReference type="EMBL" id="AB025582">
    <property type="protein sequence ID" value="BAB12436.1"/>
    <property type="molecule type" value="mRNA"/>
</dbReference>
<dbReference type="EMBL" id="AK165807">
    <property type="protein sequence ID" value="BAE38387.1"/>
    <property type="molecule type" value="mRNA"/>
</dbReference>
<dbReference type="EMBL" id="AL683884">
    <property type="status" value="NOT_ANNOTATED_CDS"/>
    <property type="molecule type" value="Genomic_DNA"/>
</dbReference>
<dbReference type="EMBL" id="BC003489">
    <property type="protein sequence ID" value="AAH03489.1"/>
    <property type="molecule type" value="mRNA"/>
</dbReference>
<dbReference type="EMBL" id="BC005628">
    <property type="protein sequence ID" value="AAH05628.1"/>
    <property type="molecule type" value="mRNA"/>
</dbReference>
<dbReference type="EMBL" id="BC093506">
    <property type="protein sequence ID" value="AAH93506.1"/>
    <property type="molecule type" value="mRNA"/>
</dbReference>
<dbReference type="CCDS" id="CCDS18151.1">
    <molecule id="Q9EST5-1"/>
</dbReference>
<dbReference type="RefSeq" id="NP_570959.1">
    <molecule id="Q9EST5-1"/>
    <property type="nucleotide sequence ID" value="NM_130889.3"/>
</dbReference>
<dbReference type="SMR" id="Q9EST5"/>
<dbReference type="BioGRID" id="212319">
    <property type="interactions" value="14"/>
</dbReference>
<dbReference type="FunCoup" id="Q9EST5">
    <property type="interactions" value="4394"/>
</dbReference>
<dbReference type="IntAct" id="Q9EST5">
    <property type="interactions" value="2"/>
</dbReference>
<dbReference type="STRING" id="10090.ENSMUSP00000099990"/>
<dbReference type="GlyGen" id="Q9EST5">
    <property type="glycosylation" value="1 site, 1 N-linked glycan (1 site)"/>
</dbReference>
<dbReference type="iPTMnet" id="Q9EST5"/>
<dbReference type="PhosphoSitePlus" id="Q9EST5"/>
<dbReference type="SwissPalm" id="Q9EST5"/>
<dbReference type="jPOST" id="Q9EST5"/>
<dbReference type="PaxDb" id="10090-ENSMUSP00000099990"/>
<dbReference type="PeptideAtlas" id="Q9EST5"/>
<dbReference type="ProteomicsDB" id="282091">
    <molecule id="Q9EST5-1"/>
</dbReference>
<dbReference type="ProteomicsDB" id="282092">
    <molecule id="Q9EST5-2"/>
</dbReference>
<dbReference type="Pumba" id="Q9EST5"/>
<dbReference type="TopDownProteomics" id="Q9EST5-1">
    <molecule id="Q9EST5-1"/>
</dbReference>
<dbReference type="Antibodypedia" id="28919">
    <property type="antibodies" value="291 antibodies from 32 providers"/>
</dbReference>
<dbReference type="DNASU" id="67628"/>
<dbReference type="Ensembl" id="ENSMUST00000102926.5">
    <molecule id="Q9EST5-1"/>
    <property type="protein sequence ID" value="ENSMUSP00000099990.5"/>
    <property type="gene ID" value="ENSMUSG00000028333.11"/>
</dbReference>
<dbReference type="GeneID" id="67628"/>
<dbReference type="KEGG" id="mmu:67628"/>
<dbReference type="UCSC" id="uc008stt.1">
    <molecule id="Q9EST5-1"/>
    <property type="organism name" value="mouse"/>
</dbReference>
<dbReference type="UCSC" id="uc012dds.1">
    <molecule id="Q9EST5-2"/>
    <property type="organism name" value="mouse"/>
</dbReference>
<dbReference type="AGR" id="MGI:1914878"/>
<dbReference type="CTD" id="10541"/>
<dbReference type="MGI" id="MGI:1914878">
    <property type="gene designation" value="Anp32b"/>
</dbReference>
<dbReference type="VEuPathDB" id="HostDB:ENSMUSG00000028333"/>
<dbReference type="eggNOG" id="KOG2739">
    <property type="taxonomic scope" value="Eukaryota"/>
</dbReference>
<dbReference type="GeneTree" id="ENSGT00950000182907"/>
<dbReference type="HOGENOM" id="CLU_063314_1_1_1"/>
<dbReference type="InParanoid" id="Q9EST5"/>
<dbReference type="OMA" id="MPNNQVS"/>
<dbReference type="OrthoDB" id="2160613at2759"/>
<dbReference type="PhylomeDB" id="Q9EST5"/>
<dbReference type="TreeFam" id="TF317206"/>
<dbReference type="BioGRID-ORCS" id="67628">
    <property type="hits" value="10 hits in 78 CRISPR screens"/>
</dbReference>
<dbReference type="ChiTaRS" id="Anp32b">
    <property type="organism name" value="mouse"/>
</dbReference>
<dbReference type="PRO" id="PR:Q9EST5"/>
<dbReference type="Proteomes" id="UP000000589">
    <property type="component" value="Chromosome 4"/>
</dbReference>
<dbReference type="RNAct" id="Q9EST5">
    <property type="molecule type" value="protein"/>
</dbReference>
<dbReference type="Bgee" id="ENSMUSG00000028333">
    <property type="expression patterns" value="Expressed in embryonic post-anal tail and 73 other cell types or tissues"/>
</dbReference>
<dbReference type="GO" id="GO:0005737">
    <property type="term" value="C:cytoplasm"/>
    <property type="evidence" value="ECO:0007669"/>
    <property type="project" value="Ensembl"/>
</dbReference>
<dbReference type="GO" id="GO:0005730">
    <property type="term" value="C:nucleolus"/>
    <property type="evidence" value="ECO:0007669"/>
    <property type="project" value="Ensembl"/>
</dbReference>
<dbReference type="GO" id="GO:0005654">
    <property type="term" value="C:nucleoplasm"/>
    <property type="evidence" value="ECO:0007669"/>
    <property type="project" value="Ensembl"/>
</dbReference>
<dbReference type="GO" id="GO:0005634">
    <property type="term" value="C:nucleus"/>
    <property type="evidence" value="ECO:0000314"/>
    <property type="project" value="MGI"/>
</dbReference>
<dbReference type="GO" id="GO:0042393">
    <property type="term" value="F:histone binding"/>
    <property type="evidence" value="ECO:0007669"/>
    <property type="project" value="Ensembl"/>
</dbReference>
<dbReference type="GO" id="GO:0070063">
    <property type="term" value="F:RNA polymerase binding"/>
    <property type="evidence" value="ECO:0007669"/>
    <property type="project" value="Ensembl"/>
</dbReference>
<dbReference type="GO" id="GO:0000082">
    <property type="term" value="P:G1/S transition of mitotic cell cycle"/>
    <property type="evidence" value="ECO:0000266"/>
    <property type="project" value="MGI"/>
</dbReference>
<dbReference type="GO" id="GO:0048839">
    <property type="term" value="P:inner ear development"/>
    <property type="evidence" value="ECO:0000315"/>
    <property type="project" value="MGI"/>
</dbReference>
<dbReference type="GO" id="GO:0043066">
    <property type="term" value="P:negative regulation of apoptotic process"/>
    <property type="evidence" value="ECO:0007669"/>
    <property type="project" value="Ensembl"/>
</dbReference>
<dbReference type="GO" id="GO:0045596">
    <property type="term" value="P:negative regulation of cell differentiation"/>
    <property type="evidence" value="ECO:0007669"/>
    <property type="project" value="Ensembl"/>
</dbReference>
<dbReference type="GO" id="GO:0006334">
    <property type="term" value="P:nucleosome assembly"/>
    <property type="evidence" value="ECO:0007669"/>
    <property type="project" value="Ensembl"/>
</dbReference>
<dbReference type="GO" id="GO:0046827">
    <property type="term" value="P:positive regulation of protein export from nucleus"/>
    <property type="evidence" value="ECO:0007669"/>
    <property type="project" value="Ensembl"/>
</dbReference>
<dbReference type="GO" id="GO:0060021">
    <property type="term" value="P:roof of mouth development"/>
    <property type="evidence" value="ECO:0000315"/>
    <property type="project" value="MGI"/>
</dbReference>
<dbReference type="GO" id="GO:0001944">
    <property type="term" value="P:vasculature development"/>
    <property type="evidence" value="ECO:0000315"/>
    <property type="project" value="MGI"/>
</dbReference>
<dbReference type="GO" id="GO:0021591">
    <property type="term" value="P:ventricular system development"/>
    <property type="evidence" value="ECO:0000315"/>
    <property type="project" value="MGI"/>
</dbReference>
<dbReference type="FunFam" id="3.80.10.10:FF:000003">
    <property type="entry name" value="Acidic leucine-rich nuclear phosphoprotein 32 family member A"/>
    <property type="match status" value="1"/>
</dbReference>
<dbReference type="Gene3D" id="3.80.10.10">
    <property type="entry name" value="Ribonuclease Inhibitor"/>
    <property type="match status" value="1"/>
</dbReference>
<dbReference type="InterPro" id="IPR045081">
    <property type="entry name" value="AN32"/>
</dbReference>
<dbReference type="InterPro" id="IPR001611">
    <property type="entry name" value="Leu-rich_rpt"/>
</dbReference>
<dbReference type="InterPro" id="IPR032675">
    <property type="entry name" value="LRR_dom_sf"/>
</dbReference>
<dbReference type="InterPro" id="IPR003603">
    <property type="entry name" value="U2A'_phosphoprotein32A_C"/>
</dbReference>
<dbReference type="PANTHER" id="PTHR11375">
    <property type="entry name" value="ACIDIC LEUCINE-RICH NUCLEAR PHOSPHOPROTEIN 32"/>
    <property type="match status" value="1"/>
</dbReference>
<dbReference type="PANTHER" id="PTHR11375:SF2">
    <property type="entry name" value="ACIDIC LEUCINE-RICH NUCLEAR PHOSPHOPROTEIN 32 FAMILY MEMBER B"/>
    <property type="match status" value="1"/>
</dbReference>
<dbReference type="Pfam" id="PF14580">
    <property type="entry name" value="LRR_9"/>
    <property type="match status" value="1"/>
</dbReference>
<dbReference type="SMART" id="SM00446">
    <property type="entry name" value="LRRcap"/>
    <property type="match status" value="1"/>
</dbReference>
<dbReference type="SUPFAM" id="SSF52058">
    <property type="entry name" value="L domain-like"/>
    <property type="match status" value="1"/>
</dbReference>
<dbReference type="PROSITE" id="PS51450">
    <property type="entry name" value="LRR"/>
    <property type="match status" value="3"/>
</dbReference>
<gene>
    <name type="primary">Anp32b</name>
    <name type="synonym">Pal31</name>
</gene>
<accession>Q9EST5</accession>
<accession>B1AVH9</accession>
<accession>Q566J4</accession>
<organism>
    <name type="scientific">Mus musculus</name>
    <name type="common">Mouse</name>
    <dbReference type="NCBI Taxonomy" id="10090"/>
    <lineage>
        <taxon>Eukaryota</taxon>
        <taxon>Metazoa</taxon>
        <taxon>Chordata</taxon>
        <taxon>Craniata</taxon>
        <taxon>Vertebrata</taxon>
        <taxon>Euteleostomi</taxon>
        <taxon>Mammalia</taxon>
        <taxon>Eutheria</taxon>
        <taxon>Euarchontoglires</taxon>
        <taxon>Glires</taxon>
        <taxon>Rodentia</taxon>
        <taxon>Myomorpha</taxon>
        <taxon>Muroidea</taxon>
        <taxon>Muridae</taxon>
        <taxon>Murinae</taxon>
        <taxon>Mus</taxon>
        <taxon>Mus</taxon>
    </lineage>
</organism>
<feature type="chain" id="PRO_0000236252" description="Acidic leucine-rich nuclear phosphoprotein 32 family member B">
    <location>
        <begin position="1"/>
        <end position="272"/>
    </location>
</feature>
<feature type="repeat" description="LRR 1">
    <location>
        <begin position="18"/>
        <end position="38"/>
    </location>
</feature>
<feature type="repeat" description="LRR 2">
    <location>
        <begin position="43"/>
        <end position="64"/>
    </location>
</feature>
<feature type="repeat" description="LRR 3">
    <location>
        <begin position="65"/>
        <end position="87"/>
    </location>
</feature>
<feature type="repeat" description="LRR 4">
    <location>
        <begin position="89"/>
        <end position="110"/>
    </location>
</feature>
<feature type="domain" description="LRRCT">
    <location>
        <begin position="123"/>
        <end position="161"/>
    </location>
</feature>
<feature type="region of interest" description="Disordered" evidence="4">
    <location>
        <begin position="149"/>
        <end position="272"/>
    </location>
</feature>
<feature type="short sequence motif" description="Nuclear localization signal" evidence="2">
    <location>
        <begin position="260"/>
        <end position="263"/>
    </location>
</feature>
<feature type="compositionally biased region" description="Acidic residues" evidence="4">
    <location>
        <begin position="149"/>
        <end position="254"/>
    </location>
</feature>
<feature type="compositionally biased region" description="Basic and acidic residues" evidence="4">
    <location>
        <begin position="255"/>
        <end position="265"/>
    </location>
</feature>
<feature type="modified residue" description="Phosphoserine" evidence="3">
    <location>
        <position position="164"/>
    </location>
</feature>
<feature type="modified residue" description="Phosphoserine" evidence="3">
    <location>
        <position position="171"/>
    </location>
</feature>
<feature type="modified residue" description="Phosphothreonine" evidence="10">
    <location>
        <position position="265"/>
    </location>
</feature>
<feature type="splice variant" id="VSP_023520" description="In isoform 2." evidence="8">
    <original>E</original>
    <variation>EVNTTVFFPICVKTK</variation>
    <location>
        <position position="227"/>
    </location>
</feature>
<feature type="splice variant" id="VSP_023521" description="In isoform 2." evidence="8">
    <original>GEDD</original>
    <variation>EEEPKNSSRDIPPSSVSPLVIHHQAWGLRPNKIVNVVRFSCKTLAVS</variation>
    <location>
        <begin position="269"/>
        <end position="272"/>
    </location>
</feature>
<evidence type="ECO:0000250" key="1"/>
<evidence type="ECO:0000250" key="2">
    <source>
        <dbReference type="UniProtKB" id="Q92688"/>
    </source>
</evidence>
<evidence type="ECO:0000250" key="3">
    <source>
        <dbReference type="UniProtKB" id="Q9EST6"/>
    </source>
</evidence>
<evidence type="ECO:0000256" key="4">
    <source>
        <dbReference type="SAM" id="MobiDB-lite"/>
    </source>
</evidence>
<evidence type="ECO:0000269" key="5">
    <source>
    </source>
</evidence>
<evidence type="ECO:0000269" key="6">
    <source>
    </source>
</evidence>
<evidence type="ECO:0000269" key="7">
    <source>
    </source>
</evidence>
<evidence type="ECO:0000303" key="8">
    <source>
    </source>
</evidence>
<evidence type="ECO:0000305" key="9"/>
<evidence type="ECO:0007744" key="10">
    <source>
    </source>
</evidence>
<proteinExistence type="evidence at protein level"/>
<sequence>MDMKRRIHLELRNRTPAAVRELVLDNCKAMDGKIEGLTDEFVNLEFLSLISVGLFSVSDLPKLPKLKKLELSENRIFGGLDRLAEELPSLTHLNLSGNNLKDISTLEPLKRLDCLKSLDLFGCEVTNRSDYRETVFRLLPQLSYLDGYDREDQEAPDSDVEVDSVEEAPDSDGEVDGVDKEEEDEEGEDEEEEEDEDGEEEEDEDEEDEDEDEDVEGEDDEDEVSGEEEEFGHDGEVDEDEEDEDEDEDEEEEESGKGEKRKRETDDEGEDD</sequence>